<keyword id="KW-0217">Developmental protein</keyword>
<keyword id="KW-0238">DNA-binding</keyword>
<keyword id="KW-0371">Homeobox</keyword>
<keyword id="KW-0539">Nucleus</keyword>
<keyword id="KW-1185">Reference proteome</keyword>
<keyword id="KW-0804">Transcription</keyword>
<keyword id="KW-0805">Transcription regulation</keyword>
<protein>
    <recommendedName>
        <fullName>Homeobox protein Hox-A1a</fullName>
    </recommendedName>
</protein>
<dbReference type="EMBL" id="DQ481663">
    <property type="protein sequence ID" value="ABF22384.1"/>
    <property type="molecule type" value="Genomic_DNA"/>
</dbReference>
<dbReference type="RefSeq" id="XP_011607394.1">
    <property type="nucleotide sequence ID" value="XM_011609092.1"/>
</dbReference>
<dbReference type="SMR" id="Q1KL10"/>
<dbReference type="FunCoup" id="Q1KL10">
    <property type="interactions" value="360"/>
</dbReference>
<dbReference type="STRING" id="31033.ENSTRUP00000040749"/>
<dbReference type="GeneID" id="101067786"/>
<dbReference type="KEGG" id="tru:101067786"/>
<dbReference type="CTD" id="58051"/>
<dbReference type="eggNOG" id="KOG0489">
    <property type="taxonomic scope" value="Eukaryota"/>
</dbReference>
<dbReference type="InParanoid" id="Q1KL10"/>
<dbReference type="OrthoDB" id="6159439at2759"/>
<dbReference type="Proteomes" id="UP000005226">
    <property type="component" value="Unplaced"/>
</dbReference>
<dbReference type="GO" id="GO:0005634">
    <property type="term" value="C:nucleus"/>
    <property type="evidence" value="ECO:0007669"/>
    <property type="project" value="UniProtKB-SubCell"/>
</dbReference>
<dbReference type="GO" id="GO:0000981">
    <property type="term" value="F:DNA-binding transcription factor activity, RNA polymerase II-specific"/>
    <property type="evidence" value="ECO:0007669"/>
    <property type="project" value="InterPro"/>
</dbReference>
<dbReference type="GO" id="GO:0000978">
    <property type="term" value="F:RNA polymerase II cis-regulatory region sequence-specific DNA binding"/>
    <property type="evidence" value="ECO:0007669"/>
    <property type="project" value="TreeGrafter"/>
</dbReference>
<dbReference type="CDD" id="cd00086">
    <property type="entry name" value="homeodomain"/>
    <property type="match status" value="1"/>
</dbReference>
<dbReference type="FunFam" id="1.10.10.60:FF:000113">
    <property type="entry name" value="homeobox protein Hox-B1"/>
    <property type="match status" value="1"/>
</dbReference>
<dbReference type="Gene3D" id="1.10.10.60">
    <property type="entry name" value="Homeodomain-like"/>
    <property type="match status" value="1"/>
</dbReference>
<dbReference type="InterPro" id="IPR001356">
    <property type="entry name" value="HD"/>
</dbReference>
<dbReference type="InterPro" id="IPR020479">
    <property type="entry name" value="HD_metazoa"/>
</dbReference>
<dbReference type="InterPro" id="IPR017970">
    <property type="entry name" value="Homeobox_CS"/>
</dbReference>
<dbReference type="InterPro" id="IPR009057">
    <property type="entry name" value="Homeodomain-like_sf"/>
</dbReference>
<dbReference type="InterPro" id="IPR046327">
    <property type="entry name" value="HXA1/B1/D1"/>
</dbReference>
<dbReference type="PANTHER" id="PTHR45946:SF3">
    <property type="entry name" value="HOMEOBOX PROTEIN HOX-A1"/>
    <property type="match status" value="1"/>
</dbReference>
<dbReference type="PANTHER" id="PTHR45946">
    <property type="entry name" value="HOMEOBOX PROTEIN ROUGH-RELATED"/>
    <property type="match status" value="1"/>
</dbReference>
<dbReference type="Pfam" id="PF00046">
    <property type="entry name" value="Homeodomain"/>
    <property type="match status" value="1"/>
</dbReference>
<dbReference type="PRINTS" id="PR00024">
    <property type="entry name" value="HOMEOBOX"/>
</dbReference>
<dbReference type="SMART" id="SM00389">
    <property type="entry name" value="HOX"/>
    <property type="match status" value="1"/>
</dbReference>
<dbReference type="SUPFAM" id="SSF46689">
    <property type="entry name" value="Homeodomain-like"/>
    <property type="match status" value="1"/>
</dbReference>
<dbReference type="PROSITE" id="PS00027">
    <property type="entry name" value="HOMEOBOX_1"/>
    <property type="match status" value="1"/>
</dbReference>
<dbReference type="PROSITE" id="PS50071">
    <property type="entry name" value="HOMEOBOX_2"/>
    <property type="match status" value="1"/>
</dbReference>
<organism>
    <name type="scientific">Takifugu rubripes</name>
    <name type="common">Japanese pufferfish</name>
    <name type="synonym">Fugu rubripes</name>
    <dbReference type="NCBI Taxonomy" id="31033"/>
    <lineage>
        <taxon>Eukaryota</taxon>
        <taxon>Metazoa</taxon>
        <taxon>Chordata</taxon>
        <taxon>Craniata</taxon>
        <taxon>Vertebrata</taxon>
        <taxon>Euteleostomi</taxon>
        <taxon>Actinopterygii</taxon>
        <taxon>Neopterygii</taxon>
        <taxon>Teleostei</taxon>
        <taxon>Neoteleostei</taxon>
        <taxon>Acanthomorphata</taxon>
        <taxon>Eupercaria</taxon>
        <taxon>Tetraodontiformes</taxon>
        <taxon>Tetradontoidea</taxon>
        <taxon>Tetraodontidae</taxon>
        <taxon>Takifugu</taxon>
    </lineage>
</organism>
<gene>
    <name type="primary">hoxa1a</name>
</gene>
<accession>Q1KL10</accession>
<feature type="chain" id="PRO_0000265962" description="Homeobox protein Hox-A1a">
    <location>
        <begin position="1"/>
        <end position="325"/>
    </location>
</feature>
<feature type="DNA-binding region" description="Homeobox" evidence="2">
    <location>
        <begin position="212"/>
        <end position="271"/>
    </location>
</feature>
<feature type="region of interest" description="Disordered" evidence="3">
    <location>
        <begin position="194"/>
        <end position="215"/>
    </location>
</feature>
<feature type="region of interest" description="Disordered" evidence="3">
    <location>
        <begin position="264"/>
        <end position="325"/>
    </location>
</feature>
<feature type="short sequence motif" description="Antp-type hexapeptide">
    <location>
        <begin position="187"/>
        <end position="192"/>
    </location>
</feature>
<feature type="compositionally biased region" description="Basic and acidic residues" evidence="3">
    <location>
        <begin position="285"/>
        <end position="300"/>
    </location>
</feature>
<feature type="compositionally biased region" description="Low complexity" evidence="3">
    <location>
        <begin position="301"/>
        <end position="317"/>
    </location>
</feature>
<proteinExistence type="inferred from homology"/>
<sequence length="325" mass="35189">MSSFLDYSVMSGEGSSCSVRAFHSDHGITTFQSCAVSVNNCGTDDRFMASRASPDGIPHQSYQAAVSSLGLAYGAHSACSSSYAPQSFCTTYNHYPLNQEVEPAAGFPQCGPLMYSGNISSSVVSQHRQGYGTTPLGQLQYTHSAYGAGHEQPSPFTGCSNPLSPLHAAHLEACCSPLSESASSAQTFDWMKVKRNPPKTGRSGEYGYGGQPNTVRTNFTTKQLTELEKEFHFNKYLTRARRVEIAAALQLNETQVKIWFQNRRMKQKKREKEGLLPTKPTSSDSGERNQEKVEDGESEKSVSAPSTPSPTSSTVSSGADSYPSN</sequence>
<comment type="function">
    <text evidence="1">Sequence-specific transcription factor which is part of a developmental regulatory system that provides cells with specific positional identities on the anterior-posterior axis.</text>
</comment>
<comment type="subcellular location">
    <subcellularLocation>
        <location evidence="2">Nucleus</location>
    </subcellularLocation>
</comment>
<comment type="similarity">
    <text evidence="4">Belongs to the Antp homeobox family. Labial subfamily.</text>
</comment>
<name>HXA1A_TAKRU</name>
<evidence type="ECO:0000250" key="1"/>
<evidence type="ECO:0000255" key="2">
    <source>
        <dbReference type="PROSITE-ProRule" id="PRU00108"/>
    </source>
</evidence>
<evidence type="ECO:0000256" key="3">
    <source>
        <dbReference type="SAM" id="MobiDB-lite"/>
    </source>
</evidence>
<evidence type="ECO:0000305" key="4"/>
<reference key="1">
    <citation type="journal article" date="2006" name="Proc. Natl. Acad. Sci. U.S.A.">
        <title>Highly conserved syntenic blocks at the vertebrate Hox loci and conserved regulatory elements within and outside Hox gene clusters.</title>
        <authorList>
            <person name="Lee A.P."/>
            <person name="Koh E.G.L."/>
            <person name="Tay A."/>
            <person name="Brenner S."/>
            <person name="Venkatesh B."/>
        </authorList>
    </citation>
    <scope>NUCLEOTIDE SEQUENCE [GENOMIC DNA]</scope>
</reference>